<protein>
    <recommendedName>
        <fullName>Energy-coupling factor transporter transmembrane protein EcfT</fullName>
        <shortName>ECF transporter T component EcfT</shortName>
    </recommendedName>
</protein>
<organism>
    <name type="scientific">Streptococcus thermophilus (strain ATCC BAA-250 / LMG 18311)</name>
    <dbReference type="NCBI Taxonomy" id="264199"/>
    <lineage>
        <taxon>Bacteria</taxon>
        <taxon>Bacillati</taxon>
        <taxon>Bacillota</taxon>
        <taxon>Bacilli</taxon>
        <taxon>Lactobacillales</taxon>
        <taxon>Streptococcaceae</taxon>
        <taxon>Streptococcus</taxon>
    </lineage>
</organism>
<name>ECFT_STRT2</name>
<keyword id="KW-1003">Cell membrane</keyword>
<keyword id="KW-0472">Membrane</keyword>
<keyword id="KW-1185">Reference proteome</keyword>
<keyword id="KW-0812">Transmembrane</keyword>
<keyword id="KW-1133">Transmembrane helix</keyword>
<keyword id="KW-0813">Transport</keyword>
<proteinExistence type="evidence at protein level"/>
<accession>Q5M245</accession>
<comment type="function">
    <text evidence="2">Transmembrane (T) component of an energy-coupling factor (ECF) ABC-transporter complex. Unlike classic ABC transporters this ECF transporter provides the energy necessary to transport a number of different substrates. Expression of the complex plus RibU in de-energized E.coli allows riboflavin uptake.</text>
</comment>
<comment type="subunit">
    <text evidence="2">Forms a stable energy-coupling factor (ECF) transporter complex composed of 2 membrane-embedded substrate-binding proteins (S component), 2 ATP-binding proteins (A component) and 2 transmembrane proteins (T component) upon coexpression of the components in E.coli. May be able to interact with more than 1 S component at a time.</text>
</comment>
<comment type="subcellular location">
    <subcellularLocation>
        <location evidence="4">Cell membrane</location>
        <topology evidence="4">Multi-pass membrane protein</topology>
    </subcellularLocation>
</comment>
<comment type="similarity">
    <text evidence="3">Belongs to the energy-coupling factor EcfT family.</text>
</comment>
<feature type="chain" id="PRO_0000422259" description="Energy-coupling factor transporter transmembrane protein EcfT">
    <location>
        <begin position="1"/>
        <end position="264"/>
    </location>
</feature>
<feature type="transmembrane region" description="Helical" evidence="1">
    <location>
        <begin position="27"/>
        <end position="47"/>
    </location>
</feature>
<feature type="transmembrane region" description="Helical" evidence="1">
    <location>
        <begin position="62"/>
        <end position="82"/>
    </location>
</feature>
<feature type="transmembrane region" description="Helical" evidence="1">
    <location>
        <begin position="109"/>
        <end position="129"/>
    </location>
</feature>
<feature type="transmembrane region" description="Helical" evidence="1">
    <location>
        <begin position="240"/>
        <end position="260"/>
    </location>
</feature>
<evidence type="ECO:0000255" key="1"/>
<evidence type="ECO:0000269" key="2">
    <source>
    </source>
</evidence>
<evidence type="ECO:0000305" key="3"/>
<evidence type="ECO:0000305" key="4">
    <source>
    </source>
</evidence>
<reference key="1">
    <citation type="journal article" date="2004" name="Nat. Biotechnol.">
        <title>Complete sequence and comparative genome analysis of the dairy bacterium Streptococcus thermophilus.</title>
        <authorList>
            <person name="Bolotin A."/>
            <person name="Quinquis B."/>
            <person name="Renault P."/>
            <person name="Sorokin A."/>
            <person name="Ehrlich S.D."/>
            <person name="Kulakauskas S."/>
            <person name="Lapidus A."/>
            <person name="Goltsman E."/>
            <person name="Mazur M."/>
            <person name="Pusch G.D."/>
            <person name="Fonstein M."/>
            <person name="Overbeek R."/>
            <person name="Kyprides N."/>
            <person name="Purnelle B."/>
            <person name="Prozzi D."/>
            <person name="Ngui K."/>
            <person name="Masuy D."/>
            <person name="Hancy F."/>
            <person name="Burteau S."/>
            <person name="Boutry M."/>
            <person name="Delcour J."/>
            <person name="Goffeau A."/>
            <person name="Hols P."/>
        </authorList>
    </citation>
    <scope>NUCLEOTIDE SEQUENCE [LARGE SCALE GENOMIC DNA]</scope>
    <source>
        <strain>ATCC BAA-250 / LMG 18311</strain>
    </source>
</reference>
<reference key="2">
    <citation type="journal article" date="2013" name="Proc. Natl. Acad. Sci. U.S.A.">
        <title>Assembly and mechanism of a group II ECF transporter.</title>
        <authorList>
            <person name="Karpowich N.K."/>
            <person name="Wang D.N."/>
        </authorList>
    </citation>
    <scope>FUNCTION AS A TRANSPORT COMPONENT</scope>
    <scope>SUBUNIT</scope>
    <scope>SUBCELLULAR LOCATION</scope>
    <scope>EXPRESSION IN E.COLI</scope>
    <source>
        <strain>ATCC BAA-250 / LMG 18311</strain>
    </source>
</reference>
<sequence length="264" mass="30024">MDKLIIGRYIVGDSFIHRLDPRSKLLAMLIYIIVIFWANNPVTYAVITLFTLFLVFLSKIKLGFFLGGIKPMIWIILFSTLFQVFFNTRGNVLWSIGFFKITEVGLNQGWMIFLRFILIISFSTLLTLTTTPLSLSDAVESLLKPLTIFKVPAHEIGLMLSLSLRFVPTLMDDTTRIMNAQKARGVDFDEGNIIQKVRSIIPILIPLFASSFKRADALAIAMEARGYRGSEGRTKYRRLLWNCRDTLSIIAILALGLILFYLKS</sequence>
<gene>
    <name type="primary">ecfT</name>
    <name type="ordered locus">stu2007</name>
</gene>
<dbReference type="EMBL" id="CP000023">
    <property type="protein sequence ID" value="AAV61601.1"/>
    <property type="molecule type" value="Genomic_DNA"/>
</dbReference>
<dbReference type="RefSeq" id="WP_011226702.1">
    <property type="nucleotide sequence ID" value="NC_006448.1"/>
</dbReference>
<dbReference type="SMR" id="Q5M245"/>
<dbReference type="STRING" id="264199.stu2007"/>
<dbReference type="TCDB" id="3.A.1.25.6">
    <property type="family name" value="the atp-binding cassette (abc) superfamily"/>
</dbReference>
<dbReference type="KEGG" id="stl:stu2007"/>
<dbReference type="eggNOG" id="COG0619">
    <property type="taxonomic scope" value="Bacteria"/>
</dbReference>
<dbReference type="HOGENOM" id="CLU_056469_2_2_9"/>
<dbReference type="Proteomes" id="UP000001170">
    <property type="component" value="Chromosome"/>
</dbReference>
<dbReference type="GO" id="GO:0005886">
    <property type="term" value="C:plasma membrane"/>
    <property type="evidence" value="ECO:0000314"/>
    <property type="project" value="UniProtKB"/>
</dbReference>
<dbReference type="GO" id="GO:0032217">
    <property type="term" value="F:riboflavin transmembrane transporter activity"/>
    <property type="evidence" value="ECO:0000316"/>
    <property type="project" value="UniProtKB"/>
</dbReference>
<dbReference type="GO" id="GO:0032218">
    <property type="term" value="P:riboflavin transport"/>
    <property type="evidence" value="ECO:0000316"/>
    <property type="project" value="UniProtKB"/>
</dbReference>
<dbReference type="CDD" id="cd16914">
    <property type="entry name" value="EcfT"/>
    <property type="match status" value="1"/>
</dbReference>
<dbReference type="HAMAP" id="MF_01461">
    <property type="entry name" value="EcfT"/>
    <property type="match status" value="1"/>
</dbReference>
<dbReference type="InterPro" id="IPR003339">
    <property type="entry name" value="ABC/ECF_trnsptr_transmembrane"/>
</dbReference>
<dbReference type="InterPro" id="IPR024919">
    <property type="entry name" value="EcfT"/>
</dbReference>
<dbReference type="PANTHER" id="PTHR33514">
    <property type="entry name" value="PROTEIN ABCI12, CHLOROPLASTIC"/>
    <property type="match status" value="1"/>
</dbReference>
<dbReference type="PANTHER" id="PTHR33514:SF13">
    <property type="entry name" value="PROTEIN ABCI12, CHLOROPLASTIC"/>
    <property type="match status" value="1"/>
</dbReference>
<dbReference type="Pfam" id="PF02361">
    <property type="entry name" value="CbiQ"/>
    <property type="match status" value="1"/>
</dbReference>